<keyword id="KW-0067">ATP-binding</keyword>
<keyword id="KW-0963">Cytoplasm</keyword>
<keyword id="KW-0275">Fatty acid biosynthesis</keyword>
<keyword id="KW-0276">Fatty acid metabolism</keyword>
<keyword id="KW-0444">Lipid biosynthesis</keyword>
<keyword id="KW-0443">Lipid metabolism</keyword>
<keyword id="KW-0547">Nucleotide-binding</keyword>
<keyword id="KW-0808">Transferase</keyword>
<proteinExistence type="inferred from homology"/>
<feature type="chain" id="PRO_1000134475" description="Acetyl-coenzyme A carboxylase carboxyl transferase subunit alpha">
    <location>
        <begin position="1"/>
        <end position="274"/>
    </location>
</feature>
<feature type="domain" description="CoA carboxyltransferase C-terminal" evidence="2">
    <location>
        <begin position="2"/>
        <end position="250"/>
    </location>
</feature>
<evidence type="ECO:0000255" key="1">
    <source>
        <dbReference type="HAMAP-Rule" id="MF_00823"/>
    </source>
</evidence>
<evidence type="ECO:0000255" key="2">
    <source>
        <dbReference type="PROSITE-ProRule" id="PRU01137"/>
    </source>
</evidence>
<organism>
    <name type="scientific">Clostridium botulinum (strain Alaska E43 / Type E3)</name>
    <dbReference type="NCBI Taxonomy" id="508767"/>
    <lineage>
        <taxon>Bacteria</taxon>
        <taxon>Bacillati</taxon>
        <taxon>Bacillota</taxon>
        <taxon>Clostridia</taxon>
        <taxon>Eubacteriales</taxon>
        <taxon>Clostridiaceae</taxon>
        <taxon>Clostridium</taxon>
    </lineage>
</organism>
<sequence length="274" mass="30530">MNKEFIKSIVVSSPWEKVEIARHKDRPTGKYYIDNIFKDFIEFHGDRLFGDDKAIIGGIASFEDISVTVIAITKGANTNENIERNFGMPNPEGYRKALRLMKQAEKFNRPVICFIDTPGAFCGVGAEERGQGSAIANNLFELSRLKTPIISIVIGEGGSGGALALTVADKILMLENAVYSILSPEGFASILWKDSKRVKEAANVMKITAQDLNEFGIIDTVIKEPRGGAHKNPQKQVTLIKKEIMNAMNEMKNIETNQMINERYDKFRKIGTLE</sequence>
<dbReference type="EC" id="2.1.3.15" evidence="1"/>
<dbReference type="EMBL" id="CP001078">
    <property type="protein sequence ID" value="ACD51908.1"/>
    <property type="molecule type" value="Genomic_DNA"/>
</dbReference>
<dbReference type="RefSeq" id="WP_012450166.1">
    <property type="nucleotide sequence ID" value="NC_010723.1"/>
</dbReference>
<dbReference type="SMR" id="B2V3S7"/>
<dbReference type="KEGG" id="cbt:CLH_1090"/>
<dbReference type="HOGENOM" id="CLU_015486_0_2_9"/>
<dbReference type="UniPathway" id="UPA00655">
    <property type="reaction ID" value="UER00711"/>
</dbReference>
<dbReference type="GO" id="GO:0009317">
    <property type="term" value="C:acetyl-CoA carboxylase complex"/>
    <property type="evidence" value="ECO:0007669"/>
    <property type="project" value="InterPro"/>
</dbReference>
<dbReference type="GO" id="GO:0003989">
    <property type="term" value="F:acetyl-CoA carboxylase activity"/>
    <property type="evidence" value="ECO:0007669"/>
    <property type="project" value="InterPro"/>
</dbReference>
<dbReference type="GO" id="GO:0005524">
    <property type="term" value="F:ATP binding"/>
    <property type="evidence" value="ECO:0007669"/>
    <property type="project" value="UniProtKB-KW"/>
</dbReference>
<dbReference type="GO" id="GO:0016743">
    <property type="term" value="F:carboxyl- or carbamoyltransferase activity"/>
    <property type="evidence" value="ECO:0007669"/>
    <property type="project" value="UniProtKB-UniRule"/>
</dbReference>
<dbReference type="GO" id="GO:0006633">
    <property type="term" value="P:fatty acid biosynthetic process"/>
    <property type="evidence" value="ECO:0007669"/>
    <property type="project" value="UniProtKB-KW"/>
</dbReference>
<dbReference type="GO" id="GO:2001295">
    <property type="term" value="P:malonyl-CoA biosynthetic process"/>
    <property type="evidence" value="ECO:0007669"/>
    <property type="project" value="UniProtKB-UniRule"/>
</dbReference>
<dbReference type="Gene3D" id="3.90.226.10">
    <property type="entry name" value="2-enoyl-CoA Hydratase, Chain A, domain 1"/>
    <property type="match status" value="1"/>
</dbReference>
<dbReference type="HAMAP" id="MF_00823">
    <property type="entry name" value="AcetylCoA_CT_alpha"/>
    <property type="match status" value="1"/>
</dbReference>
<dbReference type="InterPro" id="IPR001095">
    <property type="entry name" value="Acetyl_CoA_COase_a_su"/>
</dbReference>
<dbReference type="InterPro" id="IPR029045">
    <property type="entry name" value="ClpP/crotonase-like_dom_sf"/>
</dbReference>
<dbReference type="InterPro" id="IPR011763">
    <property type="entry name" value="COA_CT_C"/>
</dbReference>
<dbReference type="NCBIfam" id="TIGR00513">
    <property type="entry name" value="accA"/>
    <property type="match status" value="1"/>
</dbReference>
<dbReference type="NCBIfam" id="NF041504">
    <property type="entry name" value="AccA_sub"/>
    <property type="match status" value="1"/>
</dbReference>
<dbReference type="NCBIfam" id="NF004344">
    <property type="entry name" value="PRK05724.1"/>
    <property type="match status" value="1"/>
</dbReference>
<dbReference type="PANTHER" id="PTHR42853">
    <property type="entry name" value="ACETYL-COENZYME A CARBOXYLASE CARBOXYL TRANSFERASE SUBUNIT ALPHA"/>
    <property type="match status" value="1"/>
</dbReference>
<dbReference type="PANTHER" id="PTHR42853:SF3">
    <property type="entry name" value="ACETYL-COENZYME A CARBOXYLASE CARBOXYL TRANSFERASE SUBUNIT ALPHA, CHLOROPLASTIC"/>
    <property type="match status" value="1"/>
</dbReference>
<dbReference type="Pfam" id="PF03255">
    <property type="entry name" value="ACCA"/>
    <property type="match status" value="1"/>
</dbReference>
<dbReference type="PRINTS" id="PR01069">
    <property type="entry name" value="ACCCTRFRASEA"/>
</dbReference>
<dbReference type="SUPFAM" id="SSF52096">
    <property type="entry name" value="ClpP/crotonase"/>
    <property type="match status" value="1"/>
</dbReference>
<dbReference type="PROSITE" id="PS50989">
    <property type="entry name" value="COA_CT_CTER"/>
    <property type="match status" value="1"/>
</dbReference>
<name>ACCA_CLOBA</name>
<comment type="function">
    <text evidence="1">Component of the acetyl coenzyme A carboxylase (ACC) complex. First, biotin carboxylase catalyzes the carboxylation of biotin on its carrier protein (BCCP) and then the CO(2) group is transferred by the carboxyltransferase to acetyl-CoA to form malonyl-CoA.</text>
</comment>
<comment type="catalytic activity">
    <reaction evidence="1">
        <text>N(6)-carboxybiotinyl-L-lysyl-[protein] + acetyl-CoA = N(6)-biotinyl-L-lysyl-[protein] + malonyl-CoA</text>
        <dbReference type="Rhea" id="RHEA:54728"/>
        <dbReference type="Rhea" id="RHEA-COMP:10505"/>
        <dbReference type="Rhea" id="RHEA-COMP:10506"/>
        <dbReference type="ChEBI" id="CHEBI:57288"/>
        <dbReference type="ChEBI" id="CHEBI:57384"/>
        <dbReference type="ChEBI" id="CHEBI:83144"/>
        <dbReference type="ChEBI" id="CHEBI:83145"/>
        <dbReference type="EC" id="2.1.3.15"/>
    </reaction>
</comment>
<comment type="pathway">
    <text evidence="1">Lipid metabolism; malonyl-CoA biosynthesis; malonyl-CoA from acetyl-CoA: step 1/1.</text>
</comment>
<comment type="subunit">
    <text evidence="1">Acetyl-CoA carboxylase is a heterohexamer composed of biotin carboxyl carrier protein (AccB), biotin carboxylase (AccC) and two subunits each of ACCase subunit alpha (AccA) and ACCase subunit beta (AccD).</text>
</comment>
<comment type="subcellular location">
    <subcellularLocation>
        <location evidence="1">Cytoplasm</location>
    </subcellularLocation>
</comment>
<comment type="similarity">
    <text evidence="1">Belongs to the AccA family.</text>
</comment>
<accession>B2V3S7</accession>
<protein>
    <recommendedName>
        <fullName evidence="1">Acetyl-coenzyme A carboxylase carboxyl transferase subunit alpha</fullName>
        <shortName evidence="1">ACCase subunit alpha</shortName>
        <shortName evidence="1">Acetyl-CoA carboxylase carboxyltransferase subunit alpha</shortName>
        <ecNumber evidence="1">2.1.3.15</ecNumber>
    </recommendedName>
</protein>
<gene>
    <name evidence="1" type="primary">accA</name>
    <name type="ordered locus">CLH_1090</name>
</gene>
<reference key="1">
    <citation type="submission" date="2008-05" db="EMBL/GenBank/DDBJ databases">
        <title>Complete genome sequence of Clostridium botulinum E3 str. Alaska E43.</title>
        <authorList>
            <person name="Brinkac L.M."/>
            <person name="Brown J.L."/>
            <person name="Bruce D."/>
            <person name="Detter C."/>
            <person name="Munk C."/>
            <person name="Smith L.A."/>
            <person name="Smith T.J."/>
            <person name="Sutton G."/>
            <person name="Brettin T.S."/>
        </authorList>
    </citation>
    <scope>NUCLEOTIDE SEQUENCE [LARGE SCALE GENOMIC DNA]</scope>
    <source>
        <strain>Alaska E43 / Type E3</strain>
    </source>
</reference>